<comment type="catalytic activity">
    <reaction>
        <text>L-seryl-[protein] + ATP = O-phospho-L-seryl-[protein] + ADP + H(+)</text>
        <dbReference type="Rhea" id="RHEA:17989"/>
        <dbReference type="Rhea" id="RHEA-COMP:9863"/>
        <dbReference type="Rhea" id="RHEA-COMP:11604"/>
        <dbReference type="ChEBI" id="CHEBI:15378"/>
        <dbReference type="ChEBI" id="CHEBI:29999"/>
        <dbReference type="ChEBI" id="CHEBI:30616"/>
        <dbReference type="ChEBI" id="CHEBI:83421"/>
        <dbReference type="ChEBI" id="CHEBI:456216"/>
        <dbReference type="EC" id="2.7.11.1"/>
    </reaction>
</comment>
<comment type="catalytic activity">
    <reaction>
        <text>L-threonyl-[protein] + ATP = O-phospho-L-threonyl-[protein] + ADP + H(+)</text>
        <dbReference type="Rhea" id="RHEA:46608"/>
        <dbReference type="Rhea" id="RHEA-COMP:11060"/>
        <dbReference type="Rhea" id="RHEA-COMP:11605"/>
        <dbReference type="ChEBI" id="CHEBI:15378"/>
        <dbReference type="ChEBI" id="CHEBI:30013"/>
        <dbReference type="ChEBI" id="CHEBI:30616"/>
        <dbReference type="ChEBI" id="CHEBI:61977"/>
        <dbReference type="ChEBI" id="CHEBI:456216"/>
        <dbReference type="EC" id="2.7.11.1"/>
    </reaction>
</comment>
<comment type="interaction">
    <interactant intactId="EBI-20655952">
        <id>C0LGG6-2</id>
    </interactant>
    <interactant intactId="EBI-1238661">
        <id>Q9M9C5</id>
        <label>At1g68400</label>
    </interactant>
    <organismsDiffer>false</organismsDiffer>
    <experiments>2</experiments>
</comment>
<comment type="interaction">
    <interactant intactId="EBI-20655952">
        <id>C0LGG6-2</id>
    </interactant>
    <interactant intactId="EBI-1238677">
        <id>Q9M8T0</id>
        <label>At3g02880</label>
    </interactant>
    <organismsDiffer>false</organismsDiffer>
    <experiments>2</experiments>
</comment>
<comment type="interaction">
    <interactant intactId="EBI-20655952">
        <id>C0LGG6-2</id>
    </interactant>
    <interactant intactId="EBI-16955024">
        <id>Q9C9Y8</id>
        <label>At3g08680</label>
    </interactant>
    <organismsDiffer>false</organismsDiffer>
    <experiments>2</experiments>
</comment>
<comment type="interaction">
    <interactant intactId="EBI-20655952">
        <id>C0LGG6-2</id>
    </interactant>
    <interactant intactId="EBI-20654045">
        <id>A0A1I9LQ53</id>
        <label>At3g50230</label>
    </interactant>
    <organismsDiffer>false</organismsDiffer>
    <experiments>2</experiments>
</comment>
<comment type="interaction">
    <interactant intactId="EBI-20655952">
        <id>C0LGG6-2</id>
    </interactant>
    <interactant intactId="EBI-16946020">
        <id>O22138</id>
        <label>LRR-RLK</label>
    </interactant>
    <organismsDiffer>false</organismsDiffer>
    <experiments>2</experiments>
</comment>
<comment type="interaction">
    <interactant intactId="EBI-20655952">
        <id>C0LGG6-2</id>
    </interactant>
    <interactant intactId="EBI-20654777">
        <id>Q9C9E4</id>
        <label>PRK8</label>
    </interactant>
    <organismsDiffer>false</organismsDiffer>
    <experiments>2</experiments>
</comment>
<comment type="interaction">
    <interactant intactId="EBI-20655952">
        <id>C0LGG6-2</id>
    </interactant>
    <interactant intactId="EBI-1626936">
        <id>Q9LVI6</id>
        <label>RLK902</label>
    </interactant>
    <organismsDiffer>false</organismsDiffer>
    <experiments>2</experiments>
</comment>
<comment type="subcellular location">
    <subcellularLocation>
        <location evidence="7">Cell membrane</location>
        <topology evidence="7">Single-pass type I membrane protein</topology>
    </subcellularLocation>
</comment>
<comment type="alternative products">
    <event type="alternative splicing"/>
    <isoform>
        <id>C0LGG6-1</id>
        <name>1</name>
        <sequence type="displayed"/>
    </isoform>
    <isoform>
        <id>C0LGG6-2</id>
        <name>2</name>
        <sequence type="described" ref="VSP_038493"/>
    </isoform>
</comment>
<comment type="induction">
    <text evidence="5">Transiently by pathogenic bacteria Pseudomonas syringae. Faster level reduction following induction by treatment with the virulent compatible DC3000 strain than with avirulent incompatible strains.</text>
</comment>
<comment type="similarity">
    <text evidence="3">Belongs to the protein kinase superfamily. Ser/Thr protein kinase family.</text>
</comment>
<evidence type="ECO:0000250" key="1">
    <source>
        <dbReference type="UniProtKB" id="O48814"/>
    </source>
</evidence>
<evidence type="ECO:0000255" key="2"/>
<evidence type="ECO:0000255" key="3">
    <source>
        <dbReference type="PROSITE-ProRule" id="PRU00159"/>
    </source>
</evidence>
<evidence type="ECO:0000255" key="4">
    <source>
        <dbReference type="PROSITE-ProRule" id="PRU10027"/>
    </source>
</evidence>
<evidence type="ECO:0000269" key="5">
    <source>
    </source>
</evidence>
<evidence type="ECO:0000303" key="6">
    <source>
    </source>
</evidence>
<evidence type="ECO:0000305" key="7"/>
<proteinExistence type="evidence at protein level"/>
<protein>
    <recommendedName>
        <fullName>Probable LRR receptor-like protein kinase At1g51890</fullName>
        <ecNumber>2.7.11.1</ecNumber>
    </recommendedName>
</protein>
<name>Y5189_ARATH</name>
<organism>
    <name type="scientific">Arabidopsis thaliana</name>
    <name type="common">Mouse-ear cress</name>
    <dbReference type="NCBI Taxonomy" id="3702"/>
    <lineage>
        <taxon>Eukaryota</taxon>
        <taxon>Viridiplantae</taxon>
        <taxon>Streptophyta</taxon>
        <taxon>Embryophyta</taxon>
        <taxon>Tracheophyta</taxon>
        <taxon>Spermatophyta</taxon>
        <taxon>Magnoliopsida</taxon>
        <taxon>eudicotyledons</taxon>
        <taxon>Gunneridae</taxon>
        <taxon>Pentapetalae</taxon>
        <taxon>rosids</taxon>
        <taxon>malvids</taxon>
        <taxon>Brassicales</taxon>
        <taxon>Brassicaceae</taxon>
        <taxon>Camelineae</taxon>
        <taxon>Arabidopsis</taxon>
    </lineage>
</organism>
<reference key="1">
    <citation type="journal article" date="2000" name="Nature">
        <title>Sequence and analysis of chromosome 1 of the plant Arabidopsis thaliana.</title>
        <authorList>
            <person name="Theologis A."/>
            <person name="Ecker J.R."/>
            <person name="Palm C.J."/>
            <person name="Federspiel N.A."/>
            <person name="Kaul S."/>
            <person name="White O."/>
            <person name="Alonso J."/>
            <person name="Altafi H."/>
            <person name="Araujo R."/>
            <person name="Bowman C.L."/>
            <person name="Brooks S.Y."/>
            <person name="Buehler E."/>
            <person name="Chan A."/>
            <person name="Chao Q."/>
            <person name="Chen H."/>
            <person name="Cheuk R.F."/>
            <person name="Chin C.W."/>
            <person name="Chung M.K."/>
            <person name="Conn L."/>
            <person name="Conway A.B."/>
            <person name="Conway A.R."/>
            <person name="Creasy T.H."/>
            <person name="Dewar K."/>
            <person name="Dunn P."/>
            <person name="Etgu P."/>
            <person name="Feldblyum T.V."/>
            <person name="Feng J.-D."/>
            <person name="Fong B."/>
            <person name="Fujii C.Y."/>
            <person name="Gill J.E."/>
            <person name="Goldsmith A.D."/>
            <person name="Haas B."/>
            <person name="Hansen N.F."/>
            <person name="Hughes B."/>
            <person name="Huizar L."/>
            <person name="Hunter J.L."/>
            <person name="Jenkins J."/>
            <person name="Johnson-Hopson C."/>
            <person name="Khan S."/>
            <person name="Khaykin E."/>
            <person name="Kim C.J."/>
            <person name="Koo H.L."/>
            <person name="Kremenetskaia I."/>
            <person name="Kurtz D.B."/>
            <person name="Kwan A."/>
            <person name="Lam B."/>
            <person name="Langin-Hooper S."/>
            <person name="Lee A."/>
            <person name="Lee J.M."/>
            <person name="Lenz C.A."/>
            <person name="Li J.H."/>
            <person name="Li Y.-P."/>
            <person name="Lin X."/>
            <person name="Liu S.X."/>
            <person name="Liu Z.A."/>
            <person name="Luros J.S."/>
            <person name="Maiti R."/>
            <person name="Marziali A."/>
            <person name="Militscher J."/>
            <person name="Miranda M."/>
            <person name="Nguyen M."/>
            <person name="Nierman W.C."/>
            <person name="Osborne B.I."/>
            <person name="Pai G."/>
            <person name="Peterson J."/>
            <person name="Pham P.K."/>
            <person name="Rizzo M."/>
            <person name="Rooney T."/>
            <person name="Rowley D."/>
            <person name="Sakano H."/>
            <person name="Salzberg S.L."/>
            <person name="Schwartz J.R."/>
            <person name="Shinn P."/>
            <person name="Southwick A.M."/>
            <person name="Sun H."/>
            <person name="Tallon L.J."/>
            <person name="Tambunga G."/>
            <person name="Toriumi M.J."/>
            <person name="Town C.D."/>
            <person name="Utterback T."/>
            <person name="Van Aken S."/>
            <person name="Vaysberg M."/>
            <person name="Vysotskaia V.S."/>
            <person name="Walker M."/>
            <person name="Wu D."/>
            <person name="Yu G."/>
            <person name="Fraser C.M."/>
            <person name="Venter J.C."/>
            <person name="Davis R.W."/>
        </authorList>
    </citation>
    <scope>NUCLEOTIDE SEQUENCE [LARGE SCALE GENOMIC DNA]</scope>
    <source>
        <strain>cv. Columbia</strain>
    </source>
</reference>
<reference key="2">
    <citation type="journal article" date="2017" name="Plant J.">
        <title>Araport11: a complete reannotation of the Arabidopsis thaliana reference genome.</title>
        <authorList>
            <person name="Cheng C.Y."/>
            <person name="Krishnakumar V."/>
            <person name="Chan A.P."/>
            <person name="Thibaud-Nissen F."/>
            <person name="Schobel S."/>
            <person name="Town C.D."/>
        </authorList>
    </citation>
    <scope>GENOME REANNOTATION</scope>
    <source>
        <strain>cv. Columbia</strain>
    </source>
</reference>
<reference key="3">
    <citation type="journal article" date="2010" name="BMC Genomics">
        <title>Genome-wide cloning and sequence analysis of leucine-rich repeat receptor-like protein kinase genes in Arabidopsis thaliana.</title>
        <authorList>
            <person name="Gou X."/>
            <person name="He K."/>
            <person name="Yang H."/>
            <person name="Yuan T."/>
            <person name="Lin H."/>
            <person name="Clouse S.D."/>
            <person name="Li J."/>
        </authorList>
    </citation>
    <scope>NUCLEOTIDE SEQUENCE [LARGE SCALE MRNA] (ISOFORM 2)</scope>
    <source>
        <strain>cv. Columbia</strain>
    </source>
</reference>
<reference key="4">
    <citation type="journal article" date="2006" name="Cell">
        <title>Specific bacterial suppressors of MAMP signaling upstream of MAPKKK in Arabidopsis innate immunity.</title>
        <authorList>
            <person name="He P."/>
            <person name="Shan L."/>
            <person name="Lin N.-C."/>
            <person name="Martin G.B."/>
            <person name="Kemmerling B."/>
            <person name="Nuemberger T."/>
            <person name="Sheen J."/>
        </authorList>
    </citation>
    <scope>INDUCTION BY PATHOGENS</scope>
</reference>
<accession>C0LGG6</accession>
<accession>Q9FZB0</accession>
<gene>
    <name type="ordered locus">At1g51890</name>
    <name type="ORF">T14L22.10</name>
</gene>
<dbReference type="EC" id="2.7.11.1"/>
<dbReference type="EMBL" id="AC015448">
    <property type="protein sequence ID" value="AAF99859.1"/>
    <property type="molecule type" value="Genomic_DNA"/>
</dbReference>
<dbReference type="EMBL" id="CP002684">
    <property type="protein sequence ID" value="AEE32729.1"/>
    <property type="molecule type" value="Genomic_DNA"/>
</dbReference>
<dbReference type="EMBL" id="FJ708655">
    <property type="protein sequence ID" value="ACN59251.1"/>
    <property type="molecule type" value="mRNA"/>
</dbReference>
<dbReference type="PIR" id="D96558">
    <property type="entry name" value="D96558"/>
</dbReference>
<dbReference type="RefSeq" id="NP_175601.2">
    <molecule id="C0LGG6-1"/>
    <property type="nucleotide sequence ID" value="NM_104069.3"/>
</dbReference>
<dbReference type="SMR" id="C0LGG6"/>
<dbReference type="BioGRID" id="26841">
    <property type="interactions" value="30"/>
</dbReference>
<dbReference type="IntAct" id="C0LGG6">
    <property type="interactions" value="37"/>
</dbReference>
<dbReference type="STRING" id="3702.C0LGG6"/>
<dbReference type="GlyGen" id="C0LGG6">
    <property type="glycosylation" value="20 sites"/>
</dbReference>
<dbReference type="iPTMnet" id="C0LGG6"/>
<dbReference type="PaxDb" id="3702-AT1G51890.1"/>
<dbReference type="ProteomicsDB" id="243108">
    <molecule id="C0LGG6-1"/>
</dbReference>
<dbReference type="EnsemblPlants" id="AT1G51890.1">
    <molecule id="C0LGG6-1"/>
    <property type="protein sequence ID" value="AT1G51890.1"/>
    <property type="gene ID" value="AT1G51890"/>
</dbReference>
<dbReference type="GeneID" id="841616"/>
<dbReference type="Gramene" id="AT1G51890.1">
    <molecule id="C0LGG6-1"/>
    <property type="protein sequence ID" value="AT1G51890.1"/>
    <property type="gene ID" value="AT1G51890"/>
</dbReference>
<dbReference type="KEGG" id="ath:AT1G51890"/>
<dbReference type="Araport" id="AT1G51890"/>
<dbReference type="TAIR" id="AT1G51890"/>
<dbReference type="HOGENOM" id="CLU_000288_41_1_1"/>
<dbReference type="InParanoid" id="C0LGG6"/>
<dbReference type="PRO" id="PR:C0LGG6"/>
<dbReference type="Proteomes" id="UP000006548">
    <property type="component" value="Chromosome 1"/>
</dbReference>
<dbReference type="ExpressionAtlas" id="C0LGG6">
    <property type="expression patterns" value="baseline and differential"/>
</dbReference>
<dbReference type="GO" id="GO:0005886">
    <property type="term" value="C:plasma membrane"/>
    <property type="evidence" value="ECO:0007669"/>
    <property type="project" value="UniProtKB-SubCell"/>
</dbReference>
<dbReference type="GO" id="GO:0005524">
    <property type="term" value="F:ATP binding"/>
    <property type="evidence" value="ECO:0007669"/>
    <property type="project" value="UniProtKB-KW"/>
</dbReference>
<dbReference type="GO" id="GO:0106310">
    <property type="term" value="F:protein serine kinase activity"/>
    <property type="evidence" value="ECO:0007669"/>
    <property type="project" value="RHEA"/>
</dbReference>
<dbReference type="GO" id="GO:0004674">
    <property type="term" value="F:protein serine/threonine kinase activity"/>
    <property type="evidence" value="ECO:0007669"/>
    <property type="project" value="UniProtKB-KW"/>
</dbReference>
<dbReference type="GO" id="GO:0042742">
    <property type="term" value="P:defense response to bacterium"/>
    <property type="evidence" value="ECO:0000270"/>
    <property type="project" value="UniProtKB"/>
</dbReference>
<dbReference type="CDD" id="cd14066">
    <property type="entry name" value="STKc_IRAK"/>
    <property type="match status" value="1"/>
</dbReference>
<dbReference type="FunFam" id="3.80.10.10:FF:000129">
    <property type="entry name" value="Leucine-rich repeat receptor-like kinase"/>
    <property type="match status" value="1"/>
</dbReference>
<dbReference type="FunFam" id="3.30.200.20:FF:000394">
    <property type="entry name" value="Leucine-rich repeat receptor-like protein kinase"/>
    <property type="match status" value="1"/>
</dbReference>
<dbReference type="FunFam" id="1.10.510.10:FF:000146">
    <property type="entry name" value="LRR receptor-like serine/threonine-protein kinase IOS1"/>
    <property type="match status" value="1"/>
</dbReference>
<dbReference type="Gene3D" id="3.30.200.20">
    <property type="entry name" value="Phosphorylase Kinase, domain 1"/>
    <property type="match status" value="1"/>
</dbReference>
<dbReference type="Gene3D" id="3.80.10.10">
    <property type="entry name" value="Ribonuclease Inhibitor"/>
    <property type="match status" value="1"/>
</dbReference>
<dbReference type="Gene3D" id="1.10.510.10">
    <property type="entry name" value="Transferase(Phosphotransferase) domain 1"/>
    <property type="match status" value="1"/>
</dbReference>
<dbReference type="InterPro" id="IPR011009">
    <property type="entry name" value="Kinase-like_dom_sf"/>
</dbReference>
<dbReference type="InterPro" id="IPR001611">
    <property type="entry name" value="Leu-rich_rpt"/>
</dbReference>
<dbReference type="InterPro" id="IPR032675">
    <property type="entry name" value="LRR_dom_sf"/>
</dbReference>
<dbReference type="InterPro" id="IPR024788">
    <property type="entry name" value="Malectin-like_Carb-bd_dom"/>
</dbReference>
<dbReference type="InterPro" id="IPR000719">
    <property type="entry name" value="Prot_kinase_dom"/>
</dbReference>
<dbReference type="InterPro" id="IPR017441">
    <property type="entry name" value="Protein_kinase_ATP_BS"/>
</dbReference>
<dbReference type="InterPro" id="IPR008271">
    <property type="entry name" value="Ser/Thr_kinase_AS"/>
</dbReference>
<dbReference type="PANTHER" id="PTHR45631">
    <property type="entry name" value="OS07G0107800 PROTEIN-RELATED"/>
    <property type="match status" value="1"/>
</dbReference>
<dbReference type="PANTHER" id="PTHR45631:SF82">
    <property type="entry name" value="PROTEIN KINASE DOMAIN-CONTAINING PROTEIN"/>
    <property type="match status" value="1"/>
</dbReference>
<dbReference type="Pfam" id="PF00560">
    <property type="entry name" value="LRR_1"/>
    <property type="match status" value="1"/>
</dbReference>
<dbReference type="Pfam" id="PF12819">
    <property type="entry name" value="Malectin_like"/>
    <property type="match status" value="1"/>
</dbReference>
<dbReference type="Pfam" id="PF00069">
    <property type="entry name" value="Pkinase"/>
    <property type="match status" value="1"/>
</dbReference>
<dbReference type="SMART" id="SM00220">
    <property type="entry name" value="S_TKc"/>
    <property type="match status" value="1"/>
</dbReference>
<dbReference type="SUPFAM" id="SSF52058">
    <property type="entry name" value="L domain-like"/>
    <property type="match status" value="1"/>
</dbReference>
<dbReference type="SUPFAM" id="SSF56112">
    <property type="entry name" value="Protein kinase-like (PK-like)"/>
    <property type="match status" value="1"/>
</dbReference>
<dbReference type="PROSITE" id="PS00107">
    <property type="entry name" value="PROTEIN_KINASE_ATP"/>
    <property type="match status" value="1"/>
</dbReference>
<dbReference type="PROSITE" id="PS50011">
    <property type="entry name" value="PROTEIN_KINASE_DOM"/>
    <property type="match status" value="1"/>
</dbReference>
<dbReference type="PROSITE" id="PS00108">
    <property type="entry name" value="PROTEIN_KINASE_ST"/>
    <property type="match status" value="1"/>
</dbReference>
<sequence length="876" mass="98563">MRFLSFLIFVFAVLGLVQAQDQSGFISLDCGLVPTEITYVEKSTNITYRSDATYIDSGVPGKINEVYRTQFQQQIWALRSFPEGQRNCYNFSLTAKRKYLIRGTFIYGNYDGLNQLPSFDLYIGPNKWTSVSIPGVRNGSVSEMIHVLRQDHLQICLVKTGETTPFISSLELRPLNNNTYVTKSGSLIVVARLYFSPTPPFLRYDEDVHDRIWIPFLDNKNSLLSTELSVDTSNFYNVPQTVAKTAAVPLNATQPLKINWSLDDITSQSYIYMHFAEIENLEANETREFNITYNGGENWFSYFRPPKFRITTVYNPAAVSSLDGNFNFTFSMTGNSTHPPLINGLEIYQVLELPQLDTYQDEVSAMMNIKTIYGLSKRSSWQGDPCAPELYRWEGLNCSYPNFAPPQIISLNLSGSNLSGTITSDISKLTHLRELDLSNNDLSGDIPFVFSDMKNLTLINLSGNKNLNRSVPETLQKRIDNKSLTLIRDETGKNSTNVVAIAASVASVFAVLVILAIVFVVIRKKQRTNEASGPRSFTTGTVKSDARSSSSSIITKERKFTYSEVLKMTKNFERVLGKGGFGTVYHGNLDDTQVAVKMLSHSSAQGYKEFKAEVELLLRVHHRHLVGLVGYCDDGDNLALIYEYMEKGDLRENMSGKHSVNVLSWETRMQIAVEAAQGLEYLHNGCRPPMVHRDVKPTNILLNERSQAKLADFGLSRSFPVDGESHVMTVVAGTPGYLDPEYYRTNWLSEKSDVYSFGVVLLEIVTNQPVMNKNRERPHINEWVMFMLTNGDIKSIVDPKLNEDYDTNGVWKVVELALACVNPSSSRRPTMPHVVMELNECLALEIERKQGSQATYIKESVEFSPSSASDFSPLAR</sequence>
<feature type="signal peptide" evidence="2">
    <location>
        <begin position="1"/>
        <end position="19"/>
    </location>
</feature>
<feature type="chain" id="PRO_0000387529" description="Probable LRR receptor-like protein kinase At1g51890">
    <location>
        <begin position="20"/>
        <end position="876"/>
    </location>
</feature>
<feature type="topological domain" description="Extracellular" evidence="2">
    <location>
        <begin position="20"/>
        <end position="500"/>
    </location>
</feature>
<feature type="transmembrane region" description="Helical" evidence="2">
    <location>
        <begin position="501"/>
        <end position="521"/>
    </location>
</feature>
<feature type="topological domain" description="Cytoplasmic" evidence="2">
    <location>
        <begin position="522"/>
        <end position="872"/>
    </location>
</feature>
<feature type="repeat" description="LRR 1">
    <location>
        <begin position="407"/>
        <end position="430"/>
    </location>
</feature>
<feature type="repeat" description="LRR 2">
    <location>
        <begin position="431"/>
        <end position="453"/>
    </location>
</feature>
<feature type="repeat" description="LRR 3">
    <location>
        <begin position="455"/>
        <end position="476"/>
    </location>
</feature>
<feature type="domain" description="Protein kinase" evidence="3">
    <location>
        <begin position="570"/>
        <end position="842"/>
    </location>
</feature>
<feature type="active site" description="Proton acceptor" evidence="3 4">
    <location>
        <position position="694"/>
    </location>
</feature>
<feature type="binding site" evidence="3">
    <location>
        <begin position="576"/>
        <end position="584"/>
    </location>
    <ligand>
        <name>ATP</name>
        <dbReference type="ChEBI" id="CHEBI:30616"/>
    </ligand>
</feature>
<feature type="binding site" evidence="3">
    <location>
        <position position="597"/>
    </location>
    <ligand>
        <name>ATP</name>
        <dbReference type="ChEBI" id="CHEBI:30616"/>
    </ligand>
</feature>
<feature type="modified residue" description="Phosphothreonine" evidence="1">
    <location>
        <position position="561"/>
    </location>
</feature>
<feature type="modified residue" description="Phosphotyrosine" evidence="1">
    <location>
        <position position="642"/>
    </location>
</feature>
<feature type="modified residue" description="Phosphothreonine" evidence="1">
    <location>
        <position position="729"/>
    </location>
</feature>
<feature type="modified residue" description="Phosphothreonine" evidence="1">
    <location>
        <position position="734"/>
    </location>
</feature>
<feature type="modified residue" description="Phosphotyrosine" evidence="1">
    <location>
        <position position="742"/>
    </location>
</feature>
<feature type="glycosylation site" description="N-linked (GlcNAc...) asparagine" evidence="2">
    <location>
        <position position="45"/>
    </location>
</feature>
<feature type="glycosylation site" description="N-linked (GlcNAc...) asparagine" evidence="2">
    <location>
        <position position="90"/>
    </location>
</feature>
<feature type="glycosylation site" description="N-linked (GlcNAc...) asparagine" evidence="2">
    <location>
        <position position="138"/>
    </location>
</feature>
<feature type="glycosylation site" description="N-linked (GlcNAc...) asparagine" evidence="2">
    <location>
        <position position="177"/>
    </location>
</feature>
<feature type="glycosylation site" description="N-linked (GlcNAc...) asparagine" evidence="2">
    <location>
        <position position="251"/>
    </location>
</feature>
<feature type="glycosylation site" description="N-linked (GlcNAc...) asparagine" evidence="2">
    <location>
        <position position="259"/>
    </location>
</feature>
<feature type="glycosylation site" description="N-linked (GlcNAc...) asparagine" evidence="2">
    <location>
        <position position="284"/>
    </location>
</feature>
<feature type="glycosylation site" description="N-linked (GlcNAc...) asparagine" evidence="2">
    <location>
        <position position="290"/>
    </location>
</feature>
<feature type="glycosylation site" description="N-linked (GlcNAc...) asparagine" evidence="2">
    <location>
        <position position="327"/>
    </location>
</feature>
<feature type="glycosylation site" description="N-linked (GlcNAc...) asparagine" evidence="2">
    <location>
        <position position="335"/>
    </location>
</feature>
<feature type="glycosylation site" description="N-linked (GlcNAc...) asparagine" evidence="2">
    <location>
        <position position="397"/>
    </location>
</feature>
<feature type="glycosylation site" description="N-linked (GlcNAc...) asparagine" evidence="2">
    <location>
        <position position="412"/>
    </location>
</feature>
<feature type="glycosylation site" description="N-linked (GlcNAc...) asparagine" evidence="2">
    <location>
        <position position="417"/>
    </location>
</feature>
<feature type="glycosylation site" description="N-linked (GlcNAc...) asparagine" evidence="2">
    <location>
        <position position="455"/>
    </location>
</feature>
<feature type="glycosylation site" description="N-linked (GlcNAc...) asparagine" evidence="2">
    <location>
        <position position="460"/>
    </location>
</feature>
<feature type="glycosylation site" description="N-linked (GlcNAc...) asparagine" evidence="2">
    <location>
        <position position="468"/>
    </location>
</feature>
<feature type="glycosylation site" description="N-linked (GlcNAc...) asparagine" evidence="2">
    <location>
        <position position="481"/>
    </location>
</feature>
<feature type="glycosylation site" description="N-linked (GlcNAc...) asparagine" evidence="2">
    <location>
        <position position="494"/>
    </location>
</feature>
<feature type="splice variant" id="VSP_038493" description="In isoform 2." evidence="6">
    <location>
        <begin position="416"/>
        <end position="463"/>
    </location>
</feature>
<keyword id="KW-0025">Alternative splicing</keyword>
<keyword id="KW-0067">ATP-binding</keyword>
<keyword id="KW-1003">Cell membrane</keyword>
<keyword id="KW-0325">Glycoprotein</keyword>
<keyword id="KW-0418">Kinase</keyword>
<keyword id="KW-0433">Leucine-rich repeat</keyword>
<keyword id="KW-0472">Membrane</keyword>
<keyword id="KW-0547">Nucleotide-binding</keyword>
<keyword id="KW-0597">Phosphoprotein</keyword>
<keyword id="KW-0675">Receptor</keyword>
<keyword id="KW-1185">Reference proteome</keyword>
<keyword id="KW-0677">Repeat</keyword>
<keyword id="KW-0723">Serine/threonine-protein kinase</keyword>
<keyword id="KW-0732">Signal</keyword>
<keyword id="KW-0808">Transferase</keyword>
<keyword id="KW-0812">Transmembrane</keyword>
<keyword id="KW-1133">Transmembrane helix</keyword>